<keyword id="KW-0325">Glycoprotein</keyword>
<keyword id="KW-0328">Glycosyltransferase</keyword>
<keyword id="KW-0333">Golgi apparatus</keyword>
<keyword id="KW-0472">Membrane</keyword>
<keyword id="KW-1185">Reference proteome</keyword>
<keyword id="KW-0735">Signal-anchor</keyword>
<keyword id="KW-0808">Transferase</keyword>
<keyword id="KW-0812">Transmembrane</keyword>
<keyword id="KW-1133">Transmembrane helix</keyword>
<name>STL2_ARATH</name>
<protein>
    <recommendedName>
        <fullName evidence="4">Probable glycosyltransferase STELLO2</fullName>
        <ecNumber evidence="5">2.4.-.-</ecNumber>
    </recommendedName>
</protein>
<dbReference type="EC" id="2.4.-.-" evidence="5"/>
<dbReference type="EMBL" id="AL133248">
    <property type="protein sequence ID" value="CAB66099.1"/>
    <property type="molecule type" value="Genomic_DNA"/>
</dbReference>
<dbReference type="EMBL" id="CP002686">
    <property type="protein sequence ID" value="AEE79653.1"/>
    <property type="molecule type" value="Genomic_DNA"/>
</dbReference>
<dbReference type="EMBL" id="BT015820">
    <property type="protein sequence ID" value="AAU94383.1"/>
    <property type="molecule type" value="mRNA"/>
</dbReference>
<dbReference type="EMBL" id="BT021114">
    <property type="protein sequence ID" value="AAX12884.1"/>
    <property type="molecule type" value="mRNA"/>
</dbReference>
<dbReference type="EMBL" id="AK229605">
    <property type="protein sequence ID" value="BAF01451.1"/>
    <property type="molecule type" value="mRNA"/>
</dbReference>
<dbReference type="PIR" id="T46178">
    <property type="entry name" value="T46178"/>
</dbReference>
<dbReference type="RefSeq" id="NP_191301.1">
    <property type="nucleotide sequence ID" value="NM_115602.4"/>
</dbReference>
<dbReference type="FunCoup" id="Q9SCN0">
    <property type="interactions" value="1078"/>
</dbReference>
<dbReference type="STRING" id="3702.Q9SCN0"/>
<dbReference type="GlyCosmos" id="Q9SCN0">
    <property type="glycosylation" value="2 sites, No reported glycans"/>
</dbReference>
<dbReference type="GlyGen" id="Q9SCN0">
    <property type="glycosylation" value="2 sites"/>
</dbReference>
<dbReference type="PaxDb" id="3702-AT3G57420.1"/>
<dbReference type="ProteomicsDB" id="228265"/>
<dbReference type="EnsemblPlants" id="AT3G57420.1">
    <property type="protein sequence ID" value="AT3G57420.1"/>
    <property type="gene ID" value="AT3G57420"/>
</dbReference>
<dbReference type="GeneID" id="824909"/>
<dbReference type="Gramene" id="AT3G57420.1">
    <property type="protein sequence ID" value="AT3G57420.1"/>
    <property type="gene ID" value="AT3G57420"/>
</dbReference>
<dbReference type="KEGG" id="ath:AT3G57420"/>
<dbReference type="Araport" id="AT3G57420"/>
<dbReference type="TAIR" id="AT3G57420">
    <property type="gene designation" value="STL2"/>
</dbReference>
<dbReference type="eggNOG" id="ENOG502QTAG">
    <property type="taxonomic scope" value="Eukaryota"/>
</dbReference>
<dbReference type="HOGENOM" id="CLU_011678_0_0_1"/>
<dbReference type="InParanoid" id="Q9SCN0"/>
<dbReference type="OMA" id="NYRILDH"/>
<dbReference type="PhylomeDB" id="Q9SCN0"/>
<dbReference type="PRO" id="PR:Q9SCN0"/>
<dbReference type="Proteomes" id="UP000006548">
    <property type="component" value="Chromosome 3"/>
</dbReference>
<dbReference type="ExpressionAtlas" id="Q9SCN0">
    <property type="expression patterns" value="baseline and differential"/>
</dbReference>
<dbReference type="GO" id="GO:0005794">
    <property type="term" value="C:Golgi apparatus"/>
    <property type="evidence" value="ECO:0000314"/>
    <property type="project" value="UniProtKB"/>
</dbReference>
<dbReference type="GO" id="GO:0000139">
    <property type="term" value="C:Golgi membrane"/>
    <property type="evidence" value="ECO:0007669"/>
    <property type="project" value="UniProtKB-SubCell"/>
</dbReference>
<dbReference type="GO" id="GO:0016757">
    <property type="term" value="F:glycosyltransferase activity"/>
    <property type="evidence" value="ECO:0007669"/>
    <property type="project" value="UniProtKB-KW"/>
</dbReference>
<dbReference type="GO" id="GO:0042802">
    <property type="term" value="F:identical protein binding"/>
    <property type="evidence" value="ECO:0000353"/>
    <property type="project" value="UniProtKB"/>
</dbReference>
<dbReference type="GO" id="GO:0052324">
    <property type="term" value="P:plant-type cell wall cellulose biosynthetic process"/>
    <property type="evidence" value="ECO:0000315"/>
    <property type="project" value="TAIR"/>
</dbReference>
<dbReference type="GO" id="GO:2001009">
    <property type="term" value="P:regulation of plant-type cell wall cellulose biosynthetic process"/>
    <property type="evidence" value="ECO:0000315"/>
    <property type="project" value="UniProtKB"/>
</dbReference>
<dbReference type="InterPro" id="IPR005049">
    <property type="entry name" value="STL-like"/>
</dbReference>
<dbReference type="PANTHER" id="PTHR31362:SF0">
    <property type="entry name" value="EXOSTOSIN DOMAIN-CONTAINING PROTEIN-RELATED"/>
    <property type="match status" value="1"/>
</dbReference>
<dbReference type="PANTHER" id="PTHR31362">
    <property type="entry name" value="GLYCOSYLTRANSFERASE STELLO1-RELATED"/>
    <property type="match status" value="1"/>
</dbReference>
<dbReference type="Pfam" id="PF03385">
    <property type="entry name" value="STELLO"/>
    <property type="match status" value="1"/>
</dbReference>
<evidence type="ECO:0000255" key="1"/>
<evidence type="ECO:0000255" key="2">
    <source>
        <dbReference type="PROSITE-ProRule" id="PRU00498"/>
    </source>
</evidence>
<evidence type="ECO:0000269" key="3">
    <source>
    </source>
</evidence>
<evidence type="ECO:0000303" key="4">
    <source>
    </source>
</evidence>
<evidence type="ECO:0000305" key="5"/>
<evidence type="ECO:0000305" key="6">
    <source>
    </source>
</evidence>
<evidence type="ECO:0000312" key="7">
    <source>
        <dbReference type="Araport" id="AT3G57420"/>
    </source>
</evidence>
<evidence type="ECO:0000312" key="8">
    <source>
        <dbReference type="EMBL" id="CAB66099.1"/>
    </source>
</evidence>
<reference key="1">
    <citation type="journal article" date="2000" name="Nature">
        <title>Sequence and analysis of chromosome 3 of the plant Arabidopsis thaliana.</title>
        <authorList>
            <person name="Salanoubat M."/>
            <person name="Lemcke K."/>
            <person name="Rieger M."/>
            <person name="Ansorge W."/>
            <person name="Unseld M."/>
            <person name="Fartmann B."/>
            <person name="Valle G."/>
            <person name="Bloecker H."/>
            <person name="Perez-Alonso M."/>
            <person name="Obermaier B."/>
            <person name="Delseny M."/>
            <person name="Boutry M."/>
            <person name="Grivell L.A."/>
            <person name="Mache R."/>
            <person name="Puigdomenech P."/>
            <person name="De Simone V."/>
            <person name="Choisne N."/>
            <person name="Artiguenave F."/>
            <person name="Robert C."/>
            <person name="Brottier P."/>
            <person name="Wincker P."/>
            <person name="Cattolico L."/>
            <person name="Weissenbach J."/>
            <person name="Saurin W."/>
            <person name="Quetier F."/>
            <person name="Schaefer M."/>
            <person name="Mueller-Auer S."/>
            <person name="Gabel C."/>
            <person name="Fuchs M."/>
            <person name="Benes V."/>
            <person name="Wurmbach E."/>
            <person name="Drzonek H."/>
            <person name="Erfle H."/>
            <person name="Jordan N."/>
            <person name="Bangert S."/>
            <person name="Wiedelmann R."/>
            <person name="Kranz H."/>
            <person name="Voss H."/>
            <person name="Holland R."/>
            <person name="Brandt P."/>
            <person name="Nyakatura G."/>
            <person name="Vezzi A."/>
            <person name="D'Angelo M."/>
            <person name="Pallavicini A."/>
            <person name="Toppo S."/>
            <person name="Simionati B."/>
            <person name="Conrad A."/>
            <person name="Hornischer K."/>
            <person name="Kauer G."/>
            <person name="Loehnert T.-H."/>
            <person name="Nordsiek G."/>
            <person name="Reichelt J."/>
            <person name="Scharfe M."/>
            <person name="Schoen O."/>
            <person name="Bargues M."/>
            <person name="Terol J."/>
            <person name="Climent J."/>
            <person name="Navarro P."/>
            <person name="Collado C."/>
            <person name="Perez-Perez A."/>
            <person name="Ottenwaelder B."/>
            <person name="Duchemin D."/>
            <person name="Cooke R."/>
            <person name="Laudie M."/>
            <person name="Berger-Llauro C."/>
            <person name="Purnelle B."/>
            <person name="Masuy D."/>
            <person name="de Haan M."/>
            <person name="Maarse A.C."/>
            <person name="Alcaraz J.-P."/>
            <person name="Cottet A."/>
            <person name="Casacuberta E."/>
            <person name="Monfort A."/>
            <person name="Argiriou A."/>
            <person name="Flores M."/>
            <person name="Liguori R."/>
            <person name="Vitale D."/>
            <person name="Mannhaupt G."/>
            <person name="Haase D."/>
            <person name="Schoof H."/>
            <person name="Rudd S."/>
            <person name="Zaccaria P."/>
            <person name="Mewes H.-W."/>
            <person name="Mayer K.F.X."/>
            <person name="Kaul S."/>
            <person name="Town C.D."/>
            <person name="Koo H.L."/>
            <person name="Tallon L.J."/>
            <person name="Jenkins J."/>
            <person name="Rooney T."/>
            <person name="Rizzo M."/>
            <person name="Walts A."/>
            <person name="Utterback T."/>
            <person name="Fujii C.Y."/>
            <person name="Shea T.P."/>
            <person name="Creasy T.H."/>
            <person name="Haas B."/>
            <person name="Maiti R."/>
            <person name="Wu D."/>
            <person name="Peterson J."/>
            <person name="Van Aken S."/>
            <person name="Pai G."/>
            <person name="Militscher J."/>
            <person name="Sellers P."/>
            <person name="Gill J.E."/>
            <person name="Feldblyum T.V."/>
            <person name="Preuss D."/>
            <person name="Lin X."/>
            <person name="Nierman W.C."/>
            <person name="Salzberg S.L."/>
            <person name="White O."/>
            <person name="Venter J.C."/>
            <person name="Fraser C.M."/>
            <person name="Kaneko T."/>
            <person name="Nakamura Y."/>
            <person name="Sato S."/>
            <person name="Kato T."/>
            <person name="Asamizu E."/>
            <person name="Sasamoto S."/>
            <person name="Kimura T."/>
            <person name="Idesawa K."/>
            <person name="Kawashima K."/>
            <person name="Kishida Y."/>
            <person name="Kiyokawa C."/>
            <person name="Kohara M."/>
            <person name="Matsumoto M."/>
            <person name="Matsuno A."/>
            <person name="Muraki A."/>
            <person name="Nakayama S."/>
            <person name="Nakazaki N."/>
            <person name="Shinpo S."/>
            <person name="Takeuchi C."/>
            <person name="Wada T."/>
            <person name="Watanabe A."/>
            <person name="Yamada M."/>
            <person name="Yasuda M."/>
            <person name="Tabata S."/>
        </authorList>
    </citation>
    <scope>NUCLEOTIDE SEQUENCE [LARGE SCALE GENOMIC DNA]</scope>
    <source>
        <strain>cv. Columbia</strain>
    </source>
</reference>
<reference key="2">
    <citation type="journal article" date="2017" name="Plant J.">
        <title>Araport11: a complete reannotation of the Arabidopsis thaliana reference genome.</title>
        <authorList>
            <person name="Cheng C.Y."/>
            <person name="Krishnakumar V."/>
            <person name="Chan A.P."/>
            <person name="Thibaud-Nissen F."/>
            <person name="Schobel S."/>
            <person name="Town C.D."/>
        </authorList>
    </citation>
    <scope>GENOME REANNOTATION</scope>
    <source>
        <strain>cv. Columbia</strain>
    </source>
</reference>
<reference key="3">
    <citation type="submission" date="2005-02" db="EMBL/GenBank/DDBJ databases">
        <title>Arabidopsis ORF clones.</title>
        <authorList>
            <person name="Shinn P."/>
            <person name="Chen H."/>
            <person name="Cheuk R."/>
            <person name="Kim C.J."/>
            <person name="Ecker J.R."/>
        </authorList>
    </citation>
    <scope>NUCLEOTIDE SEQUENCE [LARGE SCALE MRNA]</scope>
</reference>
<reference key="4">
    <citation type="submission" date="2006-07" db="EMBL/GenBank/DDBJ databases">
        <title>Large-scale analysis of RIKEN Arabidopsis full-length (RAFL) cDNAs.</title>
        <authorList>
            <person name="Totoki Y."/>
            <person name="Seki M."/>
            <person name="Ishida J."/>
            <person name="Nakajima M."/>
            <person name="Enju A."/>
            <person name="Kamiya A."/>
            <person name="Narusaka M."/>
            <person name="Shin-i T."/>
            <person name="Nakagawa M."/>
            <person name="Sakamoto N."/>
            <person name="Oishi K."/>
            <person name="Kohara Y."/>
            <person name="Kobayashi M."/>
            <person name="Toyoda A."/>
            <person name="Sakaki Y."/>
            <person name="Sakurai T."/>
            <person name="Iida K."/>
            <person name="Akiyama K."/>
            <person name="Satou M."/>
            <person name="Toyoda T."/>
            <person name="Konagaya A."/>
            <person name="Carninci P."/>
            <person name="Kawai J."/>
            <person name="Hayashizaki Y."/>
            <person name="Shinozaki K."/>
        </authorList>
    </citation>
    <scope>NUCLEOTIDE SEQUENCE [LARGE SCALE MRNA]</scope>
    <source>
        <strain>cv. Columbia</strain>
    </source>
</reference>
<reference key="5">
    <citation type="journal article" date="2016" name="Nat. Commun.">
        <title>Golgi-localized STELLO proteins regulate the assembly and trafficking of cellulose synthase complexes in Arabidopsis.</title>
        <authorList>
            <person name="Zhang Y."/>
            <person name="Nikolovski N."/>
            <person name="Sorieul M."/>
            <person name="Vellosillo T."/>
            <person name="McFarlane H.E."/>
            <person name="Dupree R."/>
            <person name="Kesten C."/>
            <person name="Schneider R."/>
            <person name="Driemeier C."/>
            <person name="Lathe R."/>
            <person name="Lampugnani E."/>
            <person name="Yu X."/>
            <person name="Ivakov A."/>
            <person name="Doblin M.S."/>
            <person name="Mortimer J.C."/>
            <person name="Brown S.P."/>
            <person name="Persson S."/>
            <person name="Dupree P."/>
        </authorList>
    </citation>
    <scope>FUNCTION</scope>
    <scope>DISRUPTION PHENOTYPE</scope>
    <scope>SUBCELLULAR LOCATION</scope>
    <scope>INTERACTION WITH STL2; CESA1; CESA3; CESA4; CESA6; CESA7 AND CESA8</scope>
    <scope>LACK OF INTERACTION WITH GOT1</scope>
    <scope>SUBUNIT</scope>
</reference>
<feature type="chain" id="PRO_0000437205" description="Probable glycosyltransferase STELLO2">
    <location>
        <begin position="1"/>
        <end position="765"/>
    </location>
</feature>
<feature type="topological domain" description="Cytoplasmic" evidence="3">
    <location>
        <begin position="1"/>
        <end position="43"/>
    </location>
</feature>
<feature type="transmembrane region" description="Helical" evidence="1">
    <location>
        <begin position="44"/>
        <end position="64"/>
    </location>
</feature>
<feature type="topological domain" description="Lumenal" evidence="3">
    <location>
        <begin position="65"/>
        <end position="765"/>
    </location>
</feature>
<feature type="glycosylation site" description="N-linked (GlcNAc...) asparagine" evidence="2">
    <location>
        <position position="235"/>
    </location>
</feature>
<feature type="glycosylation site" description="N-linked (GlcNAc...) asparagine" evidence="2">
    <location>
        <position position="723"/>
    </location>
</feature>
<organism>
    <name type="scientific">Arabidopsis thaliana</name>
    <name type="common">Mouse-ear cress</name>
    <dbReference type="NCBI Taxonomy" id="3702"/>
    <lineage>
        <taxon>Eukaryota</taxon>
        <taxon>Viridiplantae</taxon>
        <taxon>Streptophyta</taxon>
        <taxon>Embryophyta</taxon>
        <taxon>Tracheophyta</taxon>
        <taxon>Spermatophyta</taxon>
        <taxon>Magnoliopsida</taxon>
        <taxon>eudicotyledons</taxon>
        <taxon>Gunneridae</taxon>
        <taxon>Pentapetalae</taxon>
        <taxon>rosids</taxon>
        <taxon>malvids</taxon>
        <taxon>Brassicales</taxon>
        <taxon>Brassicaceae</taxon>
        <taxon>Camelineae</taxon>
        <taxon>Arabidopsis</taxon>
    </lineage>
</organism>
<comment type="function">
    <text evidence="3">Probable glycosyltransferase regulating the assembly and trafficking of cellulose synthase complexes.</text>
</comment>
<comment type="subunit">
    <text evidence="3">Homo- and heterodimer with STL1 (PubMed:27277162). Interacts with CESA1, CESA3, CESA4, CESA6, CESA7 and CESA8, but not with GOT1 (PubMed:27277162).</text>
</comment>
<comment type="subcellular location">
    <subcellularLocation>
        <location evidence="3">Golgi apparatus membrane</location>
        <topology evidence="1">Single-pass type II membrane protein</topology>
    </subcellularLocation>
</comment>
<comment type="tissue specificity">
    <text evidence="6">Expressed in cells that are expanding or producing secondary cell walls.</text>
</comment>
<comment type="disruption phenotype">
    <text evidence="3">No visible phenotype, due to the redundancy with STL1. Stl1 and stl2 double mutants are impaired in cellulose production and exhibit a stunted growth.</text>
</comment>
<comment type="miscellaneous">
    <text evidence="6">In classical Greek, STELLO mean 'to set in order, arrange, send'.</text>
</comment>
<comment type="similarity">
    <text evidence="5">Belongs to the STELLO family.</text>
</comment>
<accession>Q9SCN0</accession>
<sequence length="765" mass="87660">MLVQDRVAPKPPKSRIRELPSRDRFAEPKILDFSSWVSDNVYRIVIIFLFIVTVAAFFFLYNTTDTASLLCFQSQSTQSLQSLTRPQINWNSIQIVSDKTSPYASFRTEKWIVVSVTKHPTEELKGLVKIKGWQVLAIGNSLTPKDWNLKGAIFLSLDAQAELNYRILDHLPYDSFVRKSVGYLFAIQHGAKKIFDADDRGEVIDGDLGKHFDVELVGEDARQEPILQYSHENPNRTVVNPYIHFGQRSVWPRGLPLENVGEINHEEYYTEVFGGKQFIQQGISNGLPDVDSVYYSTRKTTFEPFDIRFDEHSPKVALPQGMMVPVNSFNTLYHSSAFWGLMLPVSVSSMASDVIRGYWGQRLLWELGGYVAVYPPTVHRYDRVEAYPFSDEKDLHINVGRLIKFLLAWRSNKHRFFETILDLSFVMAEQGFWTELDVKFTAAWLQDLLMVGYQQPRLMSLELDRPRATIGHGDRKEFVPRKLPSVHLGVEEIGTVSSEIGNLIKWRKNFGNVVLIMFCNGPVERTALEWRLLYGRIFKTVVILSSRKNSDLYVQEAKLDHIYKRLPKIFDRYSSADGFVFVEDDTVLNYWNLLQADKTKLWTTDKVTESWTTVRPAGNSDWYSVQAELVKKIVSTMPVHFQVNYKEATKNSDGTSLTMCSSEVFYVPKRFVSDFTDLVNLVGDMDLHYKVAVPMFFLSMDSPQNFDPVLGSMVYKSEPASLNSSLSLYSAEAPAVHPWSISNEQDFIKLVREMAEGDPLLMELV</sequence>
<proteinExistence type="evidence at protein level"/>
<gene>
    <name evidence="4" type="primary">STL2</name>
    <name evidence="7" type="ordered locus">At3g57420</name>
    <name evidence="8" type="ORF">T8H10.20</name>
</gene>